<keyword id="KW-0687">Ribonucleoprotein</keyword>
<keyword id="KW-0689">Ribosomal protein</keyword>
<protein>
    <recommendedName>
        <fullName evidence="2">Large ribosomal subunit protein bL27</fullName>
    </recommendedName>
    <alternativeName>
        <fullName evidence="3">50S ribosomal protein L27</fullName>
    </alternativeName>
</protein>
<dbReference type="EMBL" id="CP001056">
    <property type="protein sequence ID" value="ACD24605.1"/>
    <property type="molecule type" value="Genomic_DNA"/>
</dbReference>
<dbReference type="SMR" id="B2TK69"/>
<dbReference type="KEGG" id="cbk:CLL_A0580"/>
<dbReference type="PATRIC" id="fig|935198.13.peg.526"/>
<dbReference type="HOGENOM" id="CLU_095424_4_0_9"/>
<dbReference type="Proteomes" id="UP000001195">
    <property type="component" value="Chromosome"/>
</dbReference>
<dbReference type="GO" id="GO:0022625">
    <property type="term" value="C:cytosolic large ribosomal subunit"/>
    <property type="evidence" value="ECO:0007669"/>
    <property type="project" value="TreeGrafter"/>
</dbReference>
<dbReference type="GO" id="GO:0003735">
    <property type="term" value="F:structural constituent of ribosome"/>
    <property type="evidence" value="ECO:0007669"/>
    <property type="project" value="InterPro"/>
</dbReference>
<dbReference type="GO" id="GO:0006412">
    <property type="term" value="P:translation"/>
    <property type="evidence" value="ECO:0007669"/>
    <property type="project" value="UniProtKB-UniRule"/>
</dbReference>
<dbReference type="FunFam" id="2.40.50.100:FF:000004">
    <property type="entry name" value="50S ribosomal protein L27"/>
    <property type="match status" value="1"/>
</dbReference>
<dbReference type="Gene3D" id="2.40.50.100">
    <property type="match status" value="1"/>
</dbReference>
<dbReference type="HAMAP" id="MF_00539">
    <property type="entry name" value="Ribosomal_bL27"/>
    <property type="match status" value="1"/>
</dbReference>
<dbReference type="InterPro" id="IPR001684">
    <property type="entry name" value="Ribosomal_bL27"/>
</dbReference>
<dbReference type="InterPro" id="IPR018261">
    <property type="entry name" value="Ribosomal_bL27_CS"/>
</dbReference>
<dbReference type="NCBIfam" id="TIGR00062">
    <property type="entry name" value="L27"/>
    <property type="match status" value="1"/>
</dbReference>
<dbReference type="PANTHER" id="PTHR15893:SF0">
    <property type="entry name" value="LARGE RIBOSOMAL SUBUNIT PROTEIN BL27M"/>
    <property type="match status" value="1"/>
</dbReference>
<dbReference type="PANTHER" id="PTHR15893">
    <property type="entry name" value="RIBOSOMAL PROTEIN L27"/>
    <property type="match status" value="1"/>
</dbReference>
<dbReference type="Pfam" id="PF01016">
    <property type="entry name" value="Ribosomal_L27"/>
    <property type="match status" value="1"/>
</dbReference>
<dbReference type="PRINTS" id="PR00063">
    <property type="entry name" value="RIBOSOMALL27"/>
</dbReference>
<dbReference type="SUPFAM" id="SSF110324">
    <property type="entry name" value="Ribosomal L27 protein-like"/>
    <property type="match status" value="1"/>
</dbReference>
<dbReference type="PROSITE" id="PS00831">
    <property type="entry name" value="RIBOSOMAL_L27"/>
    <property type="match status" value="1"/>
</dbReference>
<comment type="PTM">
    <text evidence="1">The N-terminus is cleaved by ribosomal processing cysteine protease Prp.</text>
</comment>
<comment type="similarity">
    <text evidence="2">Belongs to the bacterial ribosomal protein bL27 family.</text>
</comment>
<sequence>MLIMNLQLFAHKKGVGSSKNGRDSESKRLGVKSTDGEFVLAGNIIVRQRGTKIHPGNNVGRGKDDTLFAKIDGVVKFERVGKDKKKASVYPVNVEAIAE</sequence>
<feature type="propeptide" id="PRO_0000459874" evidence="1">
    <location>
        <begin position="1"/>
        <end position="9"/>
    </location>
</feature>
<feature type="chain" id="PRO_1000128720" description="Large ribosomal subunit protein bL27">
    <location>
        <begin position="10"/>
        <end position="99"/>
    </location>
</feature>
<reference key="1">
    <citation type="submission" date="2008-04" db="EMBL/GenBank/DDBJ databases">
        <title>Complete sequence of Clostridium botulinum strain Eklund.</title>
        <authorList>
            <person name="Brinkac L.M."/>
            <person name="Brown J.L."/>
            <person name="Bruce D."/>
            <person name="Detter C."/>
            <person name="Munk C."/>
            <person name="Smith L.A."/>
            <person name="Smith T.J."/>
            <person name="Sutton G."/>
            <person name="Brettin T.S."/>
        </authorList>
    </citation>
    <scope>NUCLEOTIDE SEQUENCE [LARGE SCALE GENOMIC DNA]</scope>
    <source>
        <strain>Eklund 17B / Type B</strain>
    </source>
</reference>
<evidence type="ECO:0000250" key="1">
    <source>
        <dbReference type="UniProtKB" id="Q2FXT0"/>
    </source>
</evidence>
<evidence type="ECO:0000255" key="2">
    <source>
        <dbReference type="HAMAP-Rule" id="MF_00539"/>
    </source>
</evidence>
<evidence type="ECO:0000305" key="3"/>
<organism>
    <name type="scientific">Clostridium botulinum (strain Eklund 17B / Type B)</name>
    <dbReference type="NCBI Taxonomy" id="935198"/>
    <lineage>
        <taxon>Bacteria</taxon>
        <taxon>Bacillati</taxon>
        <taxon>Bacillota</taxon>
        <taxon>Clostridia</taxon>
        <taxon>Eubacteriales</taxon>
        <taxon>Clostridiaceae</taxon>
        <taxon>Clostridium</taxon>
    </lineage>
</organism>
<proteinExistence type="inferred from homology"/>
<name>RL27_CLOBB</name>
<gene>
    <name evidence="2" type="primary">rpmA</name>
    <name type="ordered locus">CLL_A0580</name>
</gene>
<accession>B2TK69</accession>